<feature type="initiator methionine" description="Removed" evidence="1">
    <location>
        <position position="1"/>
    </location>
</feature>
<feature type="chain" id="PRO_0000418878" description="Tyrosine-protein kinase fyna">
    <location>
        <begin position="2"/>
        <end position="537"/>
    </location>
</feature>
<feature type="domain" description="SH3" evidence="5">
    <location>
        <begin position="82"/>
        <end position="143"/>
    </location>
</feature>
<feature type="domain" description="SH2" evidence="4">
    <location>
        <begin position="149"/>
        <end position="246"/>
    </location>
</feature>
<feature type="domain" description="Protein kinase" evidence="3">
    <location>
        <begin position="271"/>
        <end position="524"/>
    </location>
</feature>
<feature type="region of interest" description="Disordered" evidence="7">
    <location>
        <begin position="13"/>
        <end position="34"/>
    </location>
</feature>
<feature type="active site" description="Proton acceptor" evidence="3 6">
    <location>
        <position position="390"/>
    </location>
</feature>
<feature type="binding site" evidence="3">
    <location>
        <begin position="277"/>
        <end position="285"/>
    </location>
    <ligand>
        <name>ATP</name>
        <dbReference type="ChEBI" id="CHEBI:30616"/>
    </ligand>
</feature>
<feature type="binding site" evidence="3">
    <location>
        <position position="299"/>
    </location>
    <ligand>
        <name>ATP</name>
        <dbReference type="ChEBI" id="CHEBI:30616"/>
    </ligand>
</feature>
<feature type="modified residue" description="Phosphothreonine; by PKC" evidence="1">
    <location>
        <position position="12"/>
    </location>
</feature>
<feature type="modified residue" description="Phosphotyrosine; by autocatalysis" evidence="1">
    <location>
        <position position="420"/>
    </location>
</feature>
<feature type="modified residue" description="Phosphotyrosine" evidence="1">
    <location>
        <position position="531"/>
    </location>
</feature>
<feature type="lipid moiety-binding region" description="N-myristoyl glycine" evidence="1">
    <location>
        <position position="2"/>
    </location>
</feature>
<feature type="lipid moiety-binding region" description="S-palmitoyl cysteine" evidence="1">
    <location>
        <position position="3"/>
    </location>
</feature>
<feature type="lipid moiety-binding region" description="S-palmitoyl cysteine" evidence="1">
    <location>
        <position position="6"/>
    </location>
</feature>
<feature type="splice variant" id="VSP_044087" description="In isoform 2." evidence="11">
    <original>N</original>
    <variation>H</variation>
    <location>
        <position position="293"/>
    </location>
</feature>
<feature type="splice variant" id="VSP_044088" description="In isoform 2." evidence="11">
    <location>
        <begin position="294"/>
        <end position="537"/>
    </location>
</feature>
<feature type="mutagenesis site" description="Loss of activity." evidence="10">
    <original>K</original>
    <variation>M</variation>
    <location>
        <position position="299"/>
    </location>
</feature>
<feature type="sequence conflict" description="In Ref. 4; AAH75763." evidence="12" ref="4">
    <original>Q</original>
    <variation>R</variation>
    <location>
        <position position="5"/>
    </location>
</feature>
<feature type="sequence conflict" description="In Ref. 2; CAF06179." evidence="12" ref="2">
    <original>GVT</original>
    <variation>RVP</variation>
    <location>
        <begin position="60"/>
        <end position="62"/>
    </location>
</feature>
<feature type="sequence conflict" description="In Ref. 1; AAX47959." evidence="12" ref="1">
    <original>D</original>
    <variation>E</variation>
    <location>
        <position position="148"/>
    </location>
</feature>
<gene>
    <name type="primary">fyna</name>
    <name type="synonym">fyn</name>
</gene>
<reference key="1">
    <citation type="journal article" date="2005" name="Dev. Biol.">
        <title>Role of Fyn kinase in signaling associated with epiboly during zebrafish development.</title>
        <authorList>
            <person name="Sharma D."/>
            <person name="Holets L."/>
            <person name="Zhang X."/>
            <person name="Kinsey W.H."/>
        </authorList>
    </citation>
    <scope>NUCLEOTIDE SEQUENCE [MRNA] (ISOFORM 1)</scope>
    <scope>FUNCTION</scope>
    <scope>MUTAGENESIS OF LYS-299</scope>
    <source>
        <tissue>Embryo</tissue>
    </source>
</reference>
<reference key="2">
    <citation type="journal article" date="2005" name="EMBO Rep.">
        <title>Fyn/Yes and non-canonical Wnt signalling converge on RhoA in vertebrate gastrulation cell movements.</title>
        <authorList>
            <person name="Jopling C."/>
            <person name="den Hertog J."/>
        </authorList>
    </citation>
    <scope>NUCLEOTIDE SEQUENCE [MRNA] (ISOFORM 1)</scope>
    <scope>FUNCTION</scope>
    <scope>TISSUE SPECIFICITY</scope>
</reference>
<reference key="3">
    <citation type="journal article" date="2013" name="Nature">
        <title>The zebrafish reference genome sequence and its relationship to the human genome.</title>
        <authorList>
            <person name="Howe K."/>
            <person name="Clark M.D."/>
            <person name="Torroja C.F."/>
            <person name="Torrance J."/>
            <person name="Berthelot C."/>
            <person name="Muffato M."/>
            <person name="Collins J.E."/>
            <person name="Humphray S."/>
            <person name="McLaren K."/>
            <person name="Matthews L."/>
            <person name="McLaren S."/>
            <person name="Sealy I."/>
            <person name="Caccamo M."/>
            <person name="Churcher C."/>
            <person name="Scott C."/>
            <person name="Barrett J.C."/>
            <person name="Koch R."/>
            <person name="Rauch G.J."/>
            <person name="White S."/>
            <person name="Chow W."/>
            <person name="Kilian B."/>
            <person name="Quintais L.T."/>
            <person name="Guerra-Assuncao J.A."/>
            <person name="Zhou Y."/>
            <person name="Gu Y."/>
            <person name="Yen J."/>
            <person name="Vogel J.H."/>
            <person name="Eyre T."/>
            <person name="Redmond S."/>
            <person name="Banerjee R."/>
            <person name="Chi J."/>
            <person name="Fu B."/>
            <person name="Langley E."/>
            <person name="Maguire S.F."/>
            <person name="Laird G.K."/>
            <person name="Lloyd D."/>
            <person name="Kenyon E."/>
            <person name="Donaldson S."/>
            <person name="Sehra H."/>
            <person name="Almeida-King J."/>
            <person name="Loveland J."/>
            <person name="Trevanion S."/>
            <person name="Jones M."/>
            <person name="Quail M."/>
            <person name="Willey D."/>
            <person name="Hunt A."/>
            <person name="Burton J."/>
            <person name="Sims S."/>
            <person name="McLay K."/>
            <person name="Plumb B."/>
            <person name="Davis J."/>
            <person name="Clee C."/>
            <person name="Oliver K."/>
            <person name="Clark R."/>
            <person name="Riddle C."/>
            <person name="Elliot D."/>
            <person name="Threadgold G."/>
            <person name="Harden G."/>
            <person name="Ware D."/>
            <person name="Begum S."/>
            <person name="Mortimore B."/>
            <person name="Kerry G."/>
            <person name="Heath P."/>
            <person name="Phillimore B."/>
            <person name="Tracey A."/>
            <person name="Corby N."/>
            <person name="Dunn M."/>
            <person name="Johnson C."/>
            <person name="Wood J."/>
            <person name="Clark S."/>
            <person name="Pelan S."/>
            <person name="Griffiths G."/>
            <person name="Smith M."/>
            <person name="Glithero R."/>
            <person name="Howden P."/>
            <person name="Barker N."/>
            <person name="Lloyd C."/>
            <person name="Stevens C."/>
            <person name="Harley J."/>
            <person name="Holt K."/>
            <person name="Panagiotidis G."/>
            <person name="Lovell J."/>
            <person name="Beasley H."/>
            <person name="Henderson C."/>
            <person name="Gordon D."/>
            <person name="Auger K."/>
            <person name="Wright D."/>
            <person name="Collins J."/>
            <person name="Raisen C."/>
            <person name="Dyer L."/>
            <person name="Leung K."/>
            <person name="Robertson L."/>
            <person name="Ambridge K."/>
            <person name="Leongamornlert D."/>
            <person name="McGuire S."/>
            <person name="Gilderthorp R."/>
            <person name="Griffiths C."/>
            <person name="Manthravadi D."/>
            <person name="Nichol S."/>
            <person name="Barker G."/>
            <person name="Whitehead S."/>
            <person name="Kay M."/>
            <person name="Brown J."/>
            <person name="Murnane C."/>
            <person name="Gray E."/>
            <person name="Humphries M."/>
            <person name="Sycamore N."/>
            <person name="Barker D."/>
            <person name="Saunders D."/>
            <person name="Wallis J."/>
            <person name="Babbage A."/>
            <person name="Hammond S."/>
            <person name="Mashreghi-Mohammadi M."/>
            <person name="Barr L."/>
            <person name="Martin S."/>
            <person name="Wray P."/>
            <person name="Ellington A."/>
            <person name="Matthews N."/>
            <person name="Ellwood M."/>
            <person name="Woodmansey R."/>
            <person name="Clark G."/>
            <person name="Cooper J."/>
            <person name="Tromans A."/>
            <person name="Grafham D."/>
            <person name="Skuce C."/>
            <person name="Pandian R."/>
            <person name="Andrews R."/>
            <person name="Harrison E."/>
            <person name="Kimberley A."/>
            <person name="Garnett J."/>
            <person name="Fosker N."/>
            <person name="Hall R."/>
            <person name="Garner P."/>
            <person name="Kelly D."/>
            <person name="Bird C."/>
            <person name="Palmer S."/>
            <person name="Gehring I."/>
            <person name="Berger A."/>
            <person name="Dooley C.M."/>
            <person name="Ersan-Urun Z."/>
            <person name="Eser C."/>
            <person name="Geiger H."/>
            <person name="Geisler M."/>
            <person name="Karotki L."/>
            <person name="Kirn A."/>
            <person name="Konantz J."/>
            <person name="Konantz M."/>
            <person name="Oberlander M."/>
            <person name="Rudolph-Geiger S."/>
            <person name="Teucke M."/>
            <person name="Lanz C."/>
            <person name="Raddatz G."/>
            <person name="Osoegawa K."/>
            <person name="Zhu B."/>
            <person name="Rapp A."/>
            <person name="Widaa S."/>
            <person name="Langford C."/>
            <person name="Yang F."/>
            <person name="Schuster S.C."/>
            <person name="Carter N.P."/>
            <person name="Harrow J."/>
            <person name="Ning Z."/>
            <person name="Herrero J."/>
            <person name="Searle S.M."/>
            <person name="Enright A."/>
            <person name="Geisler R."/>
            <person name="Plasterk R.H."/>
            <person name="Lee C."/>
            <person name="Westerfield M."/>
            <person name="de Jong P.J."/>
            <person name="Zon L.I."/>
            <person name="Postlethwait J.H."/>
            <person name="Nusslein-Volhard C."/>
            <person name="Hubbard T.J."/>
            <person name="Roest Crollius H."/>
            <person name="Rogers J."/>
            <person name="Stemple D.L."/>
        </authorList>
    </citation>
    <scope>NUCLEOTIDE SEQUENCE [LARGE SCALE GENOMIC DNA]</scope>
    <source>
        <strain>Tuebingen</strain>
    </source>
</reference>
<reference key="4">
    <citation type="submission" date="2004-07" db="EMBL/GenBank/DDBJ databases">
        <authorList>
            <consortium name="NIH - Zebrafish Gene Collection (ZGC) project"/>
        </authorList>
    </citation>
    <scope>NUCLEOTIDE SEQUENCE [LARGE SCALE MRNA] (ISOFORM 2)</scope>
    <source>
        <tissue>Embryo</tissue>
    </source>
</reference>
<reference key="5">
    <citation type="journal article" date="2000" name="Anat. Rec.">
        <title>Transient nuclear localization of Fyn kinase during development in zebrafish.</title>
        <authorList>
            <person name="Rongish B.J."/>
            <person name="Kinsey W.H."/>
        </authorList>
    </citation>
    <scope>NUCLEOTIDE SEQUENCE [MRNA] OF 1-153</scope>
    <scope>SUBCELLULAR LOCATION</scope>
    <scope>ACTIVITY REGULATION</scope>
    <scope>TISSUE SPECIFICITY</scope>
    <source>
        <tissue>Embryo</tissue>
    </source>
</reference>
<name>FYNA_DANRE</name>
<evidence type="ECO:0000250" key="1"/>
<evidence type="ECO:0000250" key="2">
    <source>
        <dbReference type="UniProtKB" id="P06241"/>
    </source>
</evidence>
<evidence type="ECO:0000255" key="3">
    <source>
        <dbReference type="PROSITE-ProRule" id="PRU00159"/>
    </source>
</evidence>
<evidence type="ECO:0000255" key="4">
    <source>
        <dbReference type="PROSITE-ProRule" id="PRU00191"/>
    </source>
</evidence>
<evidence type="ECO:0000255" key="5">
    <source>
        <dbReference type="PROSITE-ProRule" id="PRU00192"/>
    </source>
</evidence>
<evidence type="ECO:0000255" key="6">
    <source>
        <dbReference type="PROSITE-ProRule" id="PRU10028"/>
    </source>
</evidence>
<evidence type="ECO:0000256" key="7">
    <source>
        <dbReference type="SAM" id="MobiDB-lite"/>
    </source>
</evidence>
<evidence type="ECO:0000269" key="8">
    <source>
    </source>
</evidence>
<evidence type="ECO:0000269" key="9">
    <source>
    </source>
</evidence>
<evidence type="ECO:0000269" key="10">
    <source>
    </source>
</evidence>
<evidence type="ECO:0000303" key="11">
    <source ref="4"/>
</evidence>
<evidence type="ECO:0000305" key="12"/>
<proteinExistence type="evidence at protein level"/>
<protein>
    <recommendedName>
        <fullName>Tyrosine-protein kinase fyna</fullName>
        <ecNumber>2.7.10.2</ecNumber>
    </recommendedName>
    <alternativeName>
        <fullName>Proto-oncogene c-Fyna</fullName>
    </alternativeName>
</protein>
<sequence length="537" mass="60569">MGCVQCKDKEATKLTDERETSVSQHAGYRYGSDPTPQHYPSFGVTAIPNYNNFHAPVSQGVTVFGGVNSSSHSGTLRSRGGTGVTLFVALYDYEARSEDDLSFRKGEKFQILNSTEGDWWEARSLTTGGTGYIPSNYVAPVDSIQAEDWYFGKLGRKDAERQLLSNGNPRGTFLIRESETTKGAYSLSIQDWDETKGDHVKHYKIRKLDNGGYYITTRAQFETLQQLVHHYSARAAGLCCRLIVPCHKGMPRLADLSVKTKDVWEIPRESLQLIKRLGNGQFGEVWMGTWNGNTKVAVKTLKPGTMSPESFLEEAQIMKKLRHDKLVQLYAVVSEEPIYIVTEYMSKGSLLDFLKDGEGRGLKLPNLVDMAAQVAAGMAYIERMNYIHRDLRSANILVGDSLVCKIADFGLARLIEDNEYTARQGAKFPIKWTAPEAALYGRFTIKSDVWSFGILLTELVTKGRVPYPGMNNREVLEQVERGYRMPCPQDCPSSLHELMLQCWKRDPEERPTFEYLQAFLEDYFTATEPQYQPGDNL</sequence>
<organism>
    <name type="scientific">Danio rerio</name>
    <name type="common">Zebrafish</name>
    <name type="synonym">Brachydanio rerio</name>
    <dbReference type="NCBI Taxonomy" id="7955"/>
    <lineage>
        <taxon>Eukaryota</taxon>
        <taxon>Metazoa</taxon>
        <taxon>Chordata</taxon>
        <taxon>Craniata</taxon>
        <taxon>Vertebrata</taxon>
        <taxon>Euteleostomi</taxon>
        <taxon>Actinopterygii</taxon>
        <taxon>Neopterygii</taxon>
        <taxon>Teleostei</taxon>
        <taxon>Ostariophysi</taxon>
        <taxon>Cypriniformes</taxon>
        <taxon>Danionidae</taxon>
        <taxon>Danioninae</taxon>
        <taxon>Danio</taxon>
    </lineage>
</organism>
<comment type="function">
    <text evidence="2 9 10">Tyrosine-protein kinase implicated in the control of cell growth. Plays a role in the regulation of intracellular calcium levels. Required in brain development and mature brain function with important roles in the regulation of axon growth, axon guidance, and neurite extension. Role in cntn1-mediated signaling (By similarity). Required for convergent extension cell movements during gastrulation, acting with yes via rhoa. May be required for epiboly to occur, possibly through its effects in calcium signaling.</text>
</comment>
<comment type="catalytic activity">
    <reaction evidence="6">
        <text>L-tyrosyl-[protein] + ATP = O-phospho-L-tyrosyl-[protein] + ADP + H(+)</text>
        <dbReference type="Rhea" id="RHEA:10596"/>
        <dbReference type="Rhea" id="RHEA-COMP:10136"/>
        <dbReference type="Rhea" id="RHEA-COMP:20101"/>
        <dbReference type="ChEBI" id="CHEBI:15378"/>
        <dbReference type="ChEBI" id="CHEBI:30616"/>
        <dbReference type="ChEBI" id="CHEBI:46858"/>
        <dbReference type="ChEBI" id="CHEBI:61978"/>
        <dbReference type="ChEBI" id="CHEBI:456216"/>
        <dbReference type="EC" id="2.7.10.2"/>
    </reaction>
</comment>
<comment type="cofactor">
    <cofactor>
        <name>Mn(2+)</name>
        <dbReference type="ChEBI" id="CHEBI:29035"/>
    </cofactor>
</comment>
<comment type="activity regulation">
    <text evidence="2 8">Inhibited by phosphorylation of Tyr-531 by leukocyte common antigen and activated by dephosphorylation of this site (By similarity). Relatively inactive in the unfertilized oocyte, undergoes rapid activation immediately following fertilization. Total activity increases progressively during later development and remains elevated during sphere and epiboly stage.</text>
</comment>
<comment type="subcellular location">
    <subcellularLocation>
        <location evidence="8">Cytoplasm</location>
    </subcellularLocation>
    <subcellularLocation>
        <location evidence="8">Nucleus</location>
    </subcellularLocation>
    <text>Transiently expressed in the nucleus at mid-blastula stage (3.3 hpf) in a large subset of cells. Nuclear localization is not observed from late blastula stage onward.</text>
</comment>
<comment type="alternative products">
    <event type="alternative splicing"/>
    <isoform>
        <id>Q6EWH2-1</id>
        <name>1</name>
        <sequence type="displayed"/>
    </isoform>
    <isoform>
        <id>Q6EWH2-2</id>
        <name>2</name>
        <sequence type="described" ref="VSP_044087 VSP_044088"/>
    </isoform>
</comment>
<comment type="tissue specificity">
    <text evidence="8 9">Widely expressed.</text>
</comment>
<comment type="developmental stage">
    <text>Expressed in the pre-gastrula embryo (at protein level).</text>
</comment>
<comment type="similarity">
    <text evidence="3">Belongs to the protein kinase superfamily. Tyr protein kinase family. SRC subfamily.</text>
</comment>
<comment type="sequence caution" evidence="12">
    <conflict type="frameshift">
        <sequence resource="EMBL-CDS" id="AAX47959"/>
    </conflict>
</comment>
<dbReference type="EC" id="2.7.10.2"/>
<dbReference type="EMBL" id="AY948197">
    <property type="protein sequence ID" value="AAX47959.1"/>
    <property type="status" value="ALT_FRAME"/>
    <property type="molecule type" value="mRNA"/>
</dbReference>
<dbReference type="EMBL" id="AJ620748">
    <property type="protein sequence ID" value="CAF06179.1"/>
    <property type="molecule type" value="mRNA"/>
</dbReference>
<dbReference type="EMBL" id="CU306817">
    <property type="status" value="NOT_ANNOTATED_CDS"/>
    <property type="molecule type" value="Genomic_DNA"/>
</dbReference>
<dbReference type="EMBL" id="BC075763">
    <property type="protein sequence ID" value="AAH75763.1"/>
    <property type="molecule type" value="mRNA"/>
</dbReference>
<dbReference type="EMBL" id="AF269145">
    <property type="protein sequence ID" value="AAF81748.1"/>
    <property type="molecule type" value="mRNA"/>
</dbReference>
<dbReference type="RefSeq" id="NP_001315092.1">
    <molecule id="Q6EWH2-1"/>
    <property type="nucleotide sequence ID" value="NM_001328163.1"/>
</dbReference>
<dbReference type="SMR" id="Q6EWH2"/>
<dbReference type="FunCoup" id="Q6EWH2">
    <property type="interactions" value="884"/>
</dbReference>
<dbReference type="STRING" id="7955.ENSDARP00000123888"/>
<dbReference type="PaxDb" id="7955-ENSDARP00000123888"/>
<dbReference type="Ensembl" id="ENSDART00000150232">
    <molecule id="Q6EWH2-1"/>
    <property type="protein sequence ID" value="ENSDARP00000123888"/>
    <property type="gene ID" value="ENSDARG00000011370"/>
</dbReference>
<dbReference type="GeneID" id="373872"/>
<dbReference type="KEGG" id="dre:373872"/>
<dbReference type="AGR" id="ZFIN:ZDB-GENE-030903-5"/>
<dbReference type="CTD" id="373872"/>
<dbReference type="ZFIN" id="ZDB-GENE-030903-5">
    <property type="gene designation" value="fyna"/>
</dbReference>
<dbReference type="eggNOG" id="KOG0197">
    <property type="taxonomic scope" value="Eukaryota"/>
</dbReference>
<dbReference type="HOGENOM" id="CLU_000288_7_2_1"/>
<dbReference type="InParanoid" id="Q6EWH2"/>
<dbReference type="OMA" id="XWYFGKL"/>
<dbReference type="OrthoDB" id="4062651at2759"/>
<dbReference type="PhylomeDB" id="Q6EWH2"/>
<dbReference type="TreeFam" id="TF351634"/>
<dbReference type="PRO" id="PR:Q6EWH2"/>
<dbReference type="Proteomes" id="UP000000437">
    <property type="component" value="Chromosome 17"/>
</dbReference>
<dbReference type="Bgee" id="ENSDARG00000011370">
    <property type="expression patterns" value="Expressed in mature ovarian follicle and 25 other cell types or tissues"/>
</dbReference>
<dbReference type="GO" id="GO:0005829">
    <property type="term" value="C:cytosol"/>
    <property type="evidence" value="ECO:0000314"/>
    <property type="project" value="ZFIN"/>
</dbReference>
<dbReference type="GO" id="GO:0005634">
    <property type="term" value="C:nucleus"/>
    <property type="evidence" value="ECO:0000314"/>
    <property type="project" value="ZFIN"/>
</dbReference>
<dbReference type="GO" id="GO:0005886">
    <property type="term" value="C:plasma membrane"/>
    <property type="evidence" value="ECO:0000318"/>
    <property type="project" value="GO_Central"/>
</dbReference>
<dbReference type="GO" id="GO:0005524">
    <property type="term" value="F:ATP binding"/>
    <property type="evidence" value="ECO:0007669"/>
    <property type="project" value="UniProtKB-KW"/>
</dbReference>
<dbReference type="GO" id="GO:0046872">
    <property type="term" value="F:metal ion binding"/>
    <property type="evidence" value="ECO:0007669"/>
    <property type="project" value="UniProtKB-KW"/>
</dbReference>
<dbReference type="GO" id="GO:0004715">
    <property type="term" value="F:non-membrane spanning protein tyrosine kinase activity"/>
    <property type="evidence" value="ECO:0000318"/>
    <property type="project" value="GO_Central"/>
</dbReference>
<dbReference type="GO" id="GO:0004672">
    <property type="term" value="F:protein kinase activity"/>
    <property type="evidence" value="ECO:0000314"/>
    <property type="project" value="ZFIN"/>
</dbReference>
<dbReference type="GO" id="GO:0005102">
    <property type="term" value="F:signaling receptor binding"/>
    <property type="evidence" value="ECO:0000318"/>
    <property type="project" value="GO_Central"/>
</dbReference>
<dbReference type="GO" id="GO:0034334">
    <property type="term" value="P:adherens junction maintenance"/>
    <property type="evidence" value="ECO:0000316"/>
    <property type="project" value="ZFIN"/>
</dbReference>
<dbReference type="GO" id="GO:0030154">
    <property type="term" value="P:cell differentiation"/>
    <property type="evidence" value="ECO:0000318"/>
    <property type="project" value="GO_Central"/>
</dbReference>
<dbReference type="GO" id="GO:0007169">
    <property type="term" value="P:cell surface receptor protein tyrosine kinase signaling pathway"/>
    <property type="evidence" value="ECO:0000318"/>
    <property type="project" value="GO_Central"/>
</dbReference>
<dbReference type="GO" id="GO:0060027">
    <property type="term" value="P:convergent extension involved in gastrulation"/>
    <property type="evidence" value="ECO:0000316"/>
    <property type="project" value="ZFIN"/>
</dbReference>
<dbReference type="GO" id="GO:0001702">
    <property type="term" value="P:gastrulation with mouth forming second"/>
    <property type="evidence" value="ECO:0000315"/>
    <property type="project" value="ZFIN"/>
</dbReference>
<dbReference type="GO" id="GO:0042552">
    <property type="term" value="P:myelination"/>
    <property type="evidence" value="ECO:0000315"/>
    <property type="project" value="ZFIN"/>
</dbReference>
<dbReference type="GO" id="GO:0051480">
    <property type="term" value="P:regulation of cytosolic calcium ion concentration"/>
    <property type="evidence" value="ECO:0000315"/>
    <property type="project" value="ZFIN"/>
</dbReference>
<dbReference type="GO" id="GO:0050852">
    <property type="term" value="P:T cell receptor signaling pathway"/>
    <property type="evidence" value="ECO:0000318"/>
    <property type="project" value="GO_Central"/>
</dbReference>
<dbReference type="CDD" id="cd05070">
    <property type="entry name" value="PTKc_Fyn"/>
    <property type="match status" value="1"/>
</dbReference>
<dbReference type="CDD" id="cd10418">
    <property type="entry name" value="SH2_Src_Fyn_isoform_a_like"/>
    <property type="match status" value="1"/>
</dbReference>
<dbReference type="CDD" id="cd12006">
    <property type="entry name" value="SH3_Fyn_Yrk"/>
    <property type="match status" value="1"/>
</dbReference>
<dbReference type="FunFam" id="1.10.510.10:FF:000553">
    <property type="entry name" value="Tyrosine-protein kinase"/>
    <property type="match status" value="1"/>
</dbReference>
<dbReference type="FunFam" id="3.30.200.20:FF:000016">
    <property type="entry name" value="Tyrosine-protein kinase"/>
    <property type="match status" value="1"/>
</dbReference>
<dbReference type="FunFam" id="3.30.505.10:FF:000001">
    <property type="entry name" value="Tyrosine-protein kinase"/>
    <property type="match status" value="1"/>
</dbReference>
<dbReference type="FunFam" id="2.30.30.40:FF:000182">
    <property type="entry name" value="Tyrosine-protein kinase Fyn"/>
    <property type="match status" value="1"/>
</dbReference>
<dbReference type="Gene3D" id="3.30.200.20">
    <property type="entry name" value="Phosphorylase Kinase, domain 1"/>
    <property type="match status" value="1"/>
</dbReference>
<dbReference type="Gene3D" id="3.30.505.10">
    <property type="entry name" value="SH2 domain"/>
    <property type="match status" value="1"/>
</dbReference>
<dbReference type="Gene3D" id="2.30.30.40">
    <property type="entry name" value="SH3 Domains"/>
    <property type="match status" value="1"/>
</dbReference>
<dbReference type="Gene3D" id="1.10.510.10">
    <property type="entry name" value="Transferase(Phosphotransferase) domain 1"/>
    <property type="match status" value="1"/>
</dbReference>
<dbReference type="InterPro" id="IPR047924">
    <property type="entry name" value="Fyn/Yrk_SH2"/>
</dbReference>
<dbReference type="InterPro" id="IPR035750">
    <property type="entry name" value="Fyn/Yrk_SH3"/>
</dbReference>
<dbReference type="InterPro" id="IPR011009">
    <property type="entry name" value="Kinase-like_dom_sf"/>
</dbReference>
<dbReference type="InterPro" id="IPR050198">
    <property type="entry name" value="Non-receptor_tyrosine_kinases"/>
</dbReference>
<dbReference type="InterPro" id="IPR000719">
    <property type="entry name" value="Prot_kinase_dom"/>
</dbReference>
<dbReference type="InterPro" id="IPR017441">
    <property type="entry name" value="Protein_kinase_ATP_BS"/>
</dbReference>
<dbReference type="InterPro" id="IPR001245">
    <property type="entry name" value="Ser-Thr/Tyr_kinase_cat_dom"/>
</dbReference>
<dbReference type="InterPro" id="IPR000980">
    <property type="entry name" value="SH2"/>
</dbReference>
<dbReference type="InterPro" id="IPR036860">
    <property type="entry name" value="SH2_dom_sf"/>
</dbReference>
<dbReference type="InterPro" id="IPR036028">
    <property type="entry name" value="SH3-like_dom_sf"/>
</dbReference>
<dbReference type="InterPro" id="IPR001452">
    <property type="entry name" value="SH3_domain"/>
</dbReference>
<dbReference type="InterPro" id="IPR008266">
    <property type="entry name" value="Tyr_kinase_AS"/>
</dbReference>
<dbReference type="InterPro" id="IPR020635">
    <property type="entry name" value="Tyr_kinase_cat_dom"/>
</dbReference>
<dbReference type="PANTHER" id="PTHR24418">
    <property type="entry name" value="TYROSINE-PROTEIN KINASE"/>
    <property type="match status" value="1"/>
</dbReference>
<dbReference type="Pfam" id="PF07714">
    <property type="entry name" value="PK_Tyr_Ser-Thr"/>
    <property type="match status" value="1"/>
</dbReference>
<dbReference type="Pfam" id="PF00017">
    <property type="entry name" value="SH2"/>
    <property type="match status" value="1"/>
</dbReference>
<dbReference type="Pfam" id="PF00018">
    <property type="entry name" value="SH3_1"/>
    <property type="match status" value="1"/>
</dbReference>
<dbReference type="PRINTS" id="PR00401">
    <property type="entry name" value="SH2DOMAIN"/>
</dbReference>
<dbReference type="PRINTS" id="PR00452">
    <property type="entry name" value="SH3DOMAIN"/>
</dbReference>
<dbReference type="PRINTS" id="PR00109">
    <property type="entry name" value="TYRKINASE"/>
</dbReference>
<dbReference type="SMART" id="SM00252">
    <property type="entry name" value="SH2"/>
    <property type="match status" value="1"/>
</dbReference>
<dbReference type="SMART" id="SM00326">
    <property type="entry name" value="SH3"/>
    <property type="match status" value="1"/>
</dbReference>
<dbReference type="SMART" id="SM00219">
    <property type="entry name" value="TyrKc"/>
    <property type="match status" value="1"/>
</dbReference>
<dbReference type="SUPFAM" id="SSF56112">
    <property type="entry name" value="Protein kinase-like (PK-like)"/>
    <property type="match status" value="1"/>
</dbReference>
<dbReference type="SUPFAM" id="SSF55550">
    <property type="entry name" value="SH2 domain"/>
    <property type="match status" value="1"/>
</dbReference>
<dbReference type="SUPFAM" id="SSF50044">
    <property type="entry name" value="SH3-domain"/>
    <property type="match status" value="1"/>
</dbReference>
<dbReference type="PROSITE" id="PS00107">
    <property type="entry name" value="PROTEIN_KINASE_ATP"/>
    <property type="match status" value="1"/>
</dbReference>
<dbReference type="PROSITE" id="PS50011">
    <property type="entry name" value="PROTEIN_KINASE_DOM"/>
    <property type="match status" value="1"/>
</dbReference>
<dbReference type="PROSITE" id="PS00109">
    <property type="entry name" value="PROTEIN_KINASE_TYR"/>
    <property type="match status" value="1"/>
</dbReference>
<dbReference type="PROSITE" id="PS50001">
    <property type="entry name" value="SH2"/>
    <property type="match status" value="1"/>
</dbReference>
<dbReference type="PROSITE" id="PS50002">
    <property type="entry name" value="SH3"/>
    <property type="match status" value="1"/>
</dbReference>
<keyword id="KW-0025">Alternative splicing</keyword>
<keyword id="KW-0067">ATP-binding</keyword>
<keyword id="KW-0963">Cytoplasm</keyword>
<keyword id="KW-0217">Developmental protein</keyword>
<keyword id="KW-0418">Kinase</keyword>
<keyword id="KW-0449">Lipoprotein</keyword>
<keyword id="KW-0464">Manganese</keyword>
<keyword id="KW-0479">Metal-binding</keyword>
<keyword id="KW-0519">Myristate</keyword>
<keyword id="KW-0547">Nucleotide-binding</keyword>
<keyword id="KW-0539">Nucleus</keyword>
<keyword id="KW-0564">Palmitate</keyword>
<keyword id="KW-0597">Phosphoprotein</keyword>
<keyword id="KW-0656">Proto-oncogene</keyword>
<keyword id="KW-1185">Reference proteome</keyword>
<keyword id="KW-0727">SH2 domain</keyword>
<keyword id="KW-0728">SH3 domain</keyword>
<keyword id="KW-0808">Transferase</keyword>
<keyword id="KW-0829">Tyrosine-protein kinase</keyword>
<accession>Q6EWH2</accession>
<accession>F8W4M2</accession>
<accession>Q58HR4</accession>
<accession>Q6DI27</accession>
<accession>Q9I8J8</accession>